<keyword id="KW-1043">Host membrane</keyword>
<keyword id="KW-0472">Membrane</keyword>
<keyword id="KW-1185">Reference proteome</keyword>
<keyword id="KW-0812">Transmembrane</keyword>
<keyword id="KW-1133">Transmembrane helix</keyword>
<gene>
    <name type="ORF">ORF5</name>
</gene>
<evidence type="ECO:0000255" key="1"/>
<evidence type="ECO:0000305" key="2"/>
<proteinExistence type="inferred from homology"/>
<reference key="1">
    <citation type="journal article" date="1996" name="Curr. Microbiol.">
        <title>Spiroplasma citri Virus SpV1: Characterization of viral sequences present in the spiroplasmal host chromosome.</title>
        <authorList>
            <person name="Bebear C.M."/>
            <person name="Aullo P."/>
            <person name="Bove J."/>
            <person name="Renaudin J."/>
        </authorList>
    </citation>
    <scope>NUCLEOTIDE SEQUENCE [GENOMIC DNA]</scope>
</reference>
<organism>
    <name type="scientific">Spiroplasma virus SpV1-C74</name>
    <name type="common">SpV1</name>
    <dbReference type="NCBI Taxonomy" id="185959"/>
    <lineage>
        <taxon>Viruses</taxon>
        <taxon>Monodnaviria</taxon>
        <taxon>Loebvirae</taxon>
        <taxon>Hofneiviricota</taxon>
        <taxon>Faserviricetes</taxon>
        <taxon>Tubulavirales</taxon>
        <taxon>Plectroviridae</taxon>
        <taxon>Vespertiliovirus</taxon>
        <taxon>Vespertiliovirus C74</taxon>
    </lineage>
</organism>
<organismHost>
    <name type="scientific">Spiroplasma melliferum</name>
    <dbReference type="NCBI Taxonomy" id="2134"/>
</organismHost>
<comment type="subcellular location">
    <subcellularLocation>
        <location evidence="2">Host membrane</location>
        <topology evidence="2">Multi-pass membrane protein</topology>
    </subcellularLocation>
</comment>
<comment type="similarity">
    <text evidence="2">Belongs to the plectrovirus ORF5 family.</text>
</comment>
<protein>
    <recommendedName>
        <fullName>Uncharacterized protein ORF5</fullName>
    </recommendedName>
</protein>
<dbReference type="EMBL" id="U28974">
    <property type="protein sequence ID" value="AAA85008.1"/>
    <property type="molecule type" value="Genomic_DNA"/>
</dbReference>
<dbReference type="RefSeq" id="NP_620622.1">
    <property type="nucleotide sequence ID" value="NC_003793.1"/>
</dbReference>
<dbReference type="SMR" id="Q88416"/>
<dbReference type="KEGG" id="vg:944355"/>
<dbReference type="OrthoDB" id="33126at10239"/>
<dbReference type="Proteomes" id="UP000001764">
    <property type="component" value="Genome"/>
</dbReference>
<dbReference type="GO" id="GO:0033644">
    <property type="term" value="C:host cell membrane"/>
    <property type="evidence" value="ECO:0007669"/>
    <property type="project" value="UniProtKB-SubCell"/>
</dbReference>
<dbReference type="GO" id="GO:0016020">
    <property type="term" value="C:membrane"/>
    <property type="evidence" value="ECO:0007669"/>
    <property type="project" value="UniProtKB-KW"/>
</dbReference>
<feature type="chain" id="PRO_0000372079" description="Uncharacterized protein ORF5">
    <location>
        <begin position="1"/>
        <end position="135"/>
    </location>
</feature>
<feature type="transmembrane region" description="Helical" evidence="1">
    <location>
        <begin position="20"/>
        <end position="40"/>
    </location>
</feature>
<feature type="transmembrane region" description="Helical" evidence="1">
    <location>
        <begin position="47"/>
        <end position="67"/>
    </location>
</feature>
<sequence>MVKMINLLVVENNNSNWDKIFSFVFDIFLFIFDVIWNTKLPMTNTSIAYFLVFFMVIKLSIYAIHGTSTQYNNLGSTVNNGVSQVYSSTVRKGINVGKNVYQNSNKQQVKKELKRQSIRYQAKNIRSTKFKGDKK</sequence>
<accession>Q88416</accession>
<name>ORF5_SPV1C</name>